<accession>Q65234</accession>
<organism>
    <name type="scientific">African swine fever virus (isolate Tick/Malawi/Lil 20-1/1983)</name>
    <name type="common">ASFV</name>
    <dbReference type="NCBI Taxonomy" id="10500"/>
    <lineage>
        <taxon>Viruses</taxon>
        <taxon>Varidnaviria</taxon>
        <taxon>Bamfordvirae</taxon>
        <taxon>Nucleocytoviricota</taxon>
        <taxon>Pokkesviricetes</taxon>
        <taxon>Asfuvirales</taxon>
        <taxon>Asfarviridae</taxon>
        <taxon>Asfivirus</taxon>
        <taxon>African swine fever virus</taxon>
    </lineage>
</organism>
<reference key="1">
    <citation type="journal article" date="1994" name="J. Gen. Virol.">
        <title>Nucleotide sequence of a 55 kbp region from the right end of the genome of a pathogenic African swine fever virus isolate (Malawi LIL20/1).</title>
        <authorList>
            <person name="Dixon L.K."/>
            <person name="Twigg S.R.F."/>
            <person name="Baylis S.A."/>
            <person name="Vydelingum S."/>
            <person name="Bristow C."/>
            <person name="Hammond J.M."/>
            <person name="Smith G.L."/>
        </authorList>
    </citation>
    <scope>NUCLEOTIDE SEQUENCE [GENOMIC DNA]</scope>
</reference>
<reference key="2">
    <citation type="submission" date="2003-03" db="EMBL/GenBank/DDBJ databases">
        <title>African swine fever virus genomes.</title>
        <authorList>
            <person name="Kutish G.F."/>
            <person name="Rock D.L."/>
        </authorList>
    </citation>
    <scope>NUCLEOTIDE SEQUENCE [LARGE SCALE GENOMIC DNA]</scope>
</reference>
<sequence length="233" mass="25718">MILIASPFSLAHLEYLNTWHANIKNIAQQHGLDIKVAIVVSKTHLNNFLPFSTALNIECITFPGCGIKEIDLLWARIKLFQHYCAIGARLLWLVSADIRPSVSTWPAIADSLKKGADAVVVPYPSQWNNLIPTVIKEIVVHQKKCLVAVDAHHLDTDTQIVGAGMGCIVLTLKALMVRLSIGKQPIKILWPDLHGTAEGIPLEGVEVGWFLNAYAHKLNIRCLGAEHIAQHLN</sequence>
<evidence type="ECO:0000305" key="1"/>
<dbReference type="EMBL" id="X71982">
    <property type="protein sequence ID" value="CAA50826.1"/>
    <property type="molecule type" value="Genomic_DNA"/>
</dbReference>
<dbReference type="EMBL" id="AY261361">
    <property type="status" value="NOT_ANNOTATED_CDS"/>
    <property type="molecule type" value="Genomic_DNA"/>
</dbReference>
<dbReference type="SMR" id="Q65234"/>
<dbReference type="Proteomes" id="UP000000860">
    <property type="component" value="Segment"/>
</dbReference>
<organismHost>
    <name type="scientific">Ornithodoros</name>
    <name type="common">relapsing fever ticks</name>
    <dbReference type="NCBI Taxonomy" id="6937"/>
</organismHost>
<organismHost>
    <name type="scientific">Phacochoerus aethiopicus</name>
    <name type="common">Warthog</name>
    <dbReference type="NCBI Taxonomy" id="85517"/>
</organismHost>
<organismHost>
    <name type="scientific">Phacochoerus africanus</name>
    <name type="common">Warthog</name>
    <dbReference type="NCBI Taxonomy" id="41426"/>
</organismHost>
<organismHost>
    <name type="scientific">Potamochoerus larvatus</name>
    <name type="common">Bushpig</name>
    <dbReference type="NCBI Taxonomy" id="273792"/>
</organismHost>
<organismHost>
    <name type="scientific">Sus scrofa</name>
    <name type="common">Pig</name>
    <dbReference type="NCBI Taxonomy" id="9823"/>
</organismHost>
<name>VF233_ASFM2</name>
<feature type="chain" id="PRO_0000373596" description="Uncharacterized protein H233R">
    <location>
        <begin position="1"/>
        <end position="233"/>
    </location>
</feature>
<keyword id="KW-0426">Late protein</keyword>
<proteinExistence type="inferred from homology"/>
<protein>
    <recommendedName>
        <fullName>Uncharacterized protein H233R</fullName>
        <shortName>pH233R</shortName>
    </recommendedName>
</protein>
<gene>
    <name type="ordered locus">Mal-126</name>
    <name type="ORF">j6R</name>
</gene>
<comment type="induction">
    <text evidence="1">Expressed in the late phase of the viral replicative cycle.</text>
</comment>
<comment type="similarity">
    <text evidence="1">Belongs to the asfivirus H233R family.</text>
</comment>